<feature type="chain" id="PRO_1000149832" description="tRNA pseudouridine synthase B">
    <location>
        <begin position="1"/>
        <end position="317"/>
    </location>
</feature>
<feature type="active site" description="Nucleophile" evidence="1">
    <location>
        <position position="47"/>
    </location>
</feature>
<keyword id="KW-0413">Isomerase</keyword>
<keyword id="KW-1185">Reference proteome</keyword>
<keyword id="KW-0819">tRNA processing</keyword>
<protein>
    <recommendedName>
        <fullName evidence="1">tRNA pseudouridine synthase B</fullName>
        <ecNumber evidence="1">5.4.99.25</ecNumber>
    </recommendedName>
    <alternativeName>
        <fullName evidence="1">tRNA pseudouridine(55) synthase</fullName>
        <shortName evidence="1">Psi55 synthase</shortName>
    </alternativeName>
    <alternativeName>
        <fullName evidence="1">tRNA pseudouridylate synthase</fullName>
    </alternativeName>
    <alternativeName>
        <fullName evidence="1">tRNA-uridine isomerase</fullName>
    </alternativeName>
</protein>
<accession>B1KRQ8</accession>
<sequence>MARRSRGRFIDGIVLLDKDTGMSSNFALQRVKRLFNANKAGHTGALDPLATGMLPICLGEATKFSQHLLDADKRYTVTAKLGERTDTSDSDGEVVQTRPINFTQELLMESLEHFRGETMQVPSMYSALKHEGQPLYKYAREGIEVPRKARPINVFELNFISLEGDELTLDIHCSKGTYIRTITDDLGEMLGCGAHVIMLRRTQVAGYPYERMVSLEQLNEMVSQAEADGVEAKSVLDPLLLPMDTAVSKFREINLAESQAPYLMNGNPVHASGLVADEIVRITIGEEHKFVGIGAMNDDGMLAPKRLIVIREDEVKA</sequence>
<gene>
    <name evidence="1" type="primary">truB</name>
    <name type="ordered locus">Swoo_3559</name>
</gene>
<name>TRUB_SHEWM</name>
<organism>
    <name type="scientific">Shewanella woodyi (strain ATCC 51908 / MS32)</name>
    <dbReference type="NCBI Taxonomy" id="392500"/>
    <lineage>
        <taxon>Bacteria</taxon>
        <taxon>Pseudomonadati</taxon>
        <taxon>Pseudomonadota</taxon>
        <taxon>Gammaproteobacteria</taxon>
        <taxon>Alteromonadales</taxon>
        <taxon>Shewanellaceae</taxon>
        <taxon>Shewanella</taxon>
    </lineage>
</organism>
<comment type="function">
    <text evidence="1">Responsible for synthesis of pseudouridine from uracil-55 in the psi GC loop of transfer RNAs.</text>
</comment>
<comment type="catalytic activity">
    <reaction evidence="1">
        <text>uridine(55) in tRNA = pseudouridine(55) in tRNA</text>
        <dbReference type="Rhea" id="RHEA:42532"/>
        <dbReference type="Rhea" id="RHEA-COMP:10101"/>
        <dbReference type="Rhea" id="RHEA-COMP:10102"/>
        <dbReference type="ChEBI" id="CHEBI:65314"/>
        <dbReference type="ChEBI" id="CHEBI:65315"/>
        <dbReference type="EC" id="5.4.99.25"/>
    </reaction>
</comment>
<comment type="similarity">
    <text evidence="1">Belongs to the pseudouridine synthase TruB family. Type 1 subfamily.</text>
</comment>
<proteinExistence type="inferred from homology"/>
<reference key="1">
    <citation type="submission" date="2008-02" db="EMBL/GenBank/DDBJ databases">
        <title>Complete sequence of Shewanella woodyi ATCC 51908.</title>
        <authorList>
            <consortium name="US DOE Joint Genome Institute"/>
            <person name="Copeland A."/>
            <person name="Lucas S."/>
            <person name="Lapidus A."/>
            <person name="Glavina del Rio T."/>
            <person name="Dalin E."/>
            <person name="Tice H."/>
            <person name="Bruce D."/>
            <person name="Goodwin L."/>
            <person name="Pitluck S."/>
            <person name="Sims D."/>
            <person name="Brettin T."/>
            <person name="Detter J.C."/>
            <person name="Han C."/>
            <person name="Kuske C.R."/>
            <person name="Schmutz J."/>
            <person name="Larimer F."/>
            <person name="Land M."/>
            <person name="Hauser L."/>
            <person name="Kyrpides N."/>
            <person name="Lykidis A."/>
            <person name="Zhao J.-S."/>
            <person name="Richardson P."/>
        </authorList>
    </citation>
    <scope>NUCLEOTIDE SEQUENCE [LARGE SCALE GENOMIC DNA]</scope>
    <source>
        <strain>ATCC 51908 / MS32</strain>
    </source>
</reference>
<dbReference type="EC" id="5.4.99.25" evidence="1"/>
<dbReference type="EMBL" id="CP000961">
    <property type="protein sequence ID" value="ACA87823.1"/>
    <property type="molecule type" value="Genomic_DNA"/>
</dbReference>
<dbReference type="RefSeq" id="WP_012326156.1">
    <property type="nucleotide sequence ID" value="NC_010506.1"/>
</dbReference>
<dbReference type="SMR" id="B1KRQ8"/>
<dbReference type="STRING" id="392500.Swoo_3559"/>
<dbReference type="KEGG" id="swd:Swoo_3559"/>
<dbReference type="eggNOG" id="COG0130">
    <property type="taxonomic scope" value="Bacteria"/>
</dbReference>
<dbReference type="HOGENOM" id="CLU_032087_0_3_6"/>
<dbReference type="Proteomes" id="UP000002168">
    <property type="component" value="Chromosome"/>
</dbReference>
<dbReference type="GO" id="GO:0003723">
    <property type="term" value="F:RNA binding"/>
    <property type="evidence" value="ECO:0007669"/>
    <property type="project" value="InterPro"/>
</dbReference>
<dbReference type="GO" id="GO:0160148">
    <property type="term" value="F:tRNA pseudouridine(55) synthase activity"/>
    <property type="evidence" value="ECO:0007669"/>
    <property type="project" value="UniProtKB-EC"/>
</dbReference>
<dbReference type="GO" id="GO:1990481">
    <property type="term" value="P:mRNA pseudouridine synthesis"/>
    <property type="evidence" value="ECO:0007669"/>
    <property type="project" value="TreeGrafter"/>
</dbReference>
<dbReference type="GO" id="GO:0031119">
    <property type="term" value="P:tRNA pseudouridine synthesis"/>
    <property type="evidence" value="ECO:0007669"/>
    <property type="project" value="UniProtKB-UniRule"/>
</dbReference>
<dbReference type="CDD" id="cd02573">
    <property type="entry name" value="PseudoU_synth_EcTruB"/>
    <property type="match status" value="1"/>
</dbReference>
<dbReference type="CDD" id="cd21152">
    <property type="entry name" value="PUA_TruB_bacterial"/>
    <property type="match status" value="1"/>
</dbReference>
<dbReference type="FunFam" id="2.30.130.10:FF:000004">
    <property type="entry name" value="tRNA pseudouridine synthase B"/>
    <property type="match status" value="1"/>
</dbReference>
<dbReference type="FunFam" id="3.30.2350.10:FF:000003">
    <property type="entry name" value="tRNA pseudouridine synthase B"/>
    <property type="match status" value="1"/>
</dbReference>
<dbReference type="Gene3D" id="3.30.2350.10">
    <property type="entry name" value="Pseudouridine synthase"/>
    <property type="match status" value="1"/>
</dbReference>
<dbReference type="Gene3D" id="2.30.130.10">
    <property type="entry name" value="PUA domain"/>
    <property type="match status" value="1"/>
</dbReference>
<dbReference type="HAMAP" id="MF_01080">
    <property type="entry name" value="TruB_bact"/>
    <property type="match status" value="1"/>
</dbReference>
<dbReference type="InterPro" id="IPR020103">
    <property type="entry name" value="PsdUridine_synth_cat_dom_sf"/>
</dbReference>
<dbReference type="InterPro" id="IPR002501">
    <property type="entry name" value="PsdUridine_synth_N"/>
</dbReference>
<dbReference type="InterPro" id="IPR015947">
    <property type="entry name" value="PUA-like_sf"/>
</dbReference>
<dbReference type="InterPro" id="IPR036974">
    <property type="entry name" value="PUA_sf"/>
</dbReference>
<dbReference type="InterPro" id="IPR014780">
    <property type="entry name" value="tRNA_psdUridine_synth_TruB"/>
</dbReference>
<dbReference type="InterPro" id="IPR015240">
    <property type="entry name" value="tRNA_sdUridine_synth_fam1_C"/>
</dbReference>
<dbReference type="InterPro" id="IPR032819">
    <property type="entry name" value="TruB_C"/>
</dbReference>
<dbReference type="NCBIfam" id="TIGR00431">
    <property type="entry name" value="TruB"/>
    <property type="match status" value="1"/>
</dbReference>
<dbReference type="PANTHER" id="PTHR13767:SF2">
    <property type="entry name" value="PSEUDOURIDYLATE SYNTHASE TRUB1"/>
    <property type="match status" value="1"/>
</dbReference>
<dbReference type="PANTHER" id="PTHR13767">
    <property type="entry name" value="TRNA-PSEUDOURIDINE SYNTHASE"/>
    <property type="match status" value="1"/>
</dbReference>
<dbReference type="Pfam" id="PF09157">
    <property type="entry name" value="TruB-C_2"/>
    <property type="match status" value="1"/>
</dbReference>
<dbReference type="Pfam" id="PF16198">
    <property type="entry name" value="TruB_C_2"/>
    <property type="match status" value="1"/>
</dbReference>
<dbReference type="Pfam" id="PF01509">
    <property type="entry name" value="TruB_N"/>
    <property type="match status" value="1"/>
</dbReference>
<dbReference type="SUPFAM" id="SSF55120">
    <property type="entry name" value="Pseudouridine synthase"/>
    <property type="match status" value="1"/>
</dbReference>
<dbReference type="SUPFAM" id="SSF88697">
    <property type="entry name" value="PUA domain-like"/>
    <property type="match status" value="1"/>
</dbReference>
<evidence type="ECO:0000255" key="1">
    <source>
        <dbReference type="HAMAP-Rule" id="MF_01080"/>
    </source>
</evidence>